<name>MURC_MYCBT</name>
<gene>
    <name evidence="1" type="primary">murC</name>
    <name type="ordered locus">JTY_2163</name>
</gene>
<evidence type="ECO:0000255" key="1">
    <source>
        <dbReference type="HAMAP-Rule" id="MF_00046"/>
    </source>
</evidence>
<comment type="function">
    <text evidence="1">Cell wall formation.</text>
</comment>
<comment type="catalytic activity">
    <reaction evidence="1">
        <text>UDP-N-acetyl-alpha-D-muramate + L-alanine + ATP = UDP-N-acetyl-alpha-D-muramoyl-L-alanine + ADP + phosphate + H(+)</text>
        <dbReference type="Rhea" id="RHEA:23372"/>
        <dbReference type="ChEBI" id="CHEBI:15378"/>
        <dbReference type="ChEBI" id="CHEBI:30616"/>
        <dbReference type="ChEBI" id="CHEBI:43474"/>
        <dbReference type="ChEBI" id="CHEBI:57972"/>
        <dbReference type="ChEBI" id="CHEBI:70757"/>
        <dbReference type="ChEBI" id="CHEBI:83898"/>
        <dbReference type="ChEBI" id="CHEBI:456216"/>
        <dbReference type="EC" id="6.3.2.8"/>
    </reaction>
</comment>
<comment type="pathway">
    <text evidence="1">Cell wall biogenesis; peptidoglycan biosynthesis.</text>
</comment>
<comment type="subcellular location">
    <subcellularLocation>
        <location evidence="1">Cytoplasm</location>
    </subcellularLocation>
</comment>
<comment type="similarity">
    <text evidence="1">Belongs to the MurCDEF family.</text>
</comment>
<dbReference type="EC" id="6.3.2.8" evidence="1"/>
<dbReference type="EMBL" id="AP010918">
    <property type="protein sequence ID" value="BAH26447.1"/>
    <property type="molecule type" value="Genomic_DNA"/>
</dbReference>
<dbReference type="RefSeq" id="WP_003411159.1">
    <property type="nucleotide sequence ID" value="NZ_CP014566.1"/>
</dbReference>
<dbReference type="SMR" id="C1AQ68"/>
<dbReference type="KEGG" id="mbt:JTY_2163"/>
<dbReference type="HOGENOM" id="CLU_028104_2_2_11"/>
<dbReference type="UniPathway" id="UPA00219"/>
<dbReference type="GO" id="GO:0005737">
    <property type="term" value="C:cytoplasm"/>
    <property type="evidence" value="ECO:0007669"/>
    <property type="project" value="UniProtKB-SubCell"/>
</dbReference>
<dbReference type="GO" id="GO:0005524">
    <property type="term" value="F:ATP binding"/>
    <property type="evidence" value="ECO:0007669"/>
    <property type="project" value="UniProtKB-UniRule"/>
</dbReference>
<dbReference type="GO" id="GO:0008763">
    <property type="term" value="F:UDP-N-acetylmuramate-L-alanine ligase activity"/>
    <property type="evidence" value="ECO:0007669"/>
    <property type="project" value="UniProtKB-UniRule"/>
</dbReference>
<dbReference type="GO" id="GO:0051301">
    <property type="term" value="P:cell division"/>
    <property type="evidence" value="ECO:0007669"/>
    <property type="project" value="UniProtKB-KW"/>
</dbReference>
<dbReference type="GO" id="GO:0071555">
    <property type="term" value="P:cell wall organization"/>
    <property type="evidence" value="ECO:0007669"/>
    <property type="project" value="UniProtKB-KW"/>
</dbReference>
<dbReference type="GO" id="GO:0009252">
    <property type="term" value="P:peptidoglycan biosynthetic process"/>
    <property type="evidence" value="ECO:0007669"/>
    <property type="project" value="UniProtKB-UniRule"/>
</dbReference>
<dbReference type="GO" id="GO:0008360">
    <property type="term" value="P:regulation of cell shape"/>
    <property type="evidence" value="ECO:0007669"/>
    <property type="project" value="UniProtKB-KW"/>
</dbReference>
<dbReference type="FunFam" id="3.40.50.720:FF:000046">
    <property type="entry name" value="UDP-N-acetylmuramate--L-alanine ligase"/>
    <property type="match status" value="1"/>
</dbReference>
<dbReference type="FunFam" id="3.90.190.20:FF:000016">
    <property type="entry name" value="UDP-N-acetylmuramate--L-alanine ligase"/>
    <property type="match status" value="1"/>
</dbReference>
<dbReference type="Gene3D" id="3.90.190.20">
    <property type="entry name" value="Mur ligase, C-terminal domain"/>
    <property type="match status" value="1"/>
</dbReference>
<dbReference type="Gene3D" id="3.40.1190.10">
    <property type="entry name" value="Mur-like, catalytic domain"/>
    <property type="match status" value="1"/>
</dbReference>
<dbReference type="Gene3D" id="3.40.50.720">
    <property type="entry name" value="NAD(P)-binding Rossmann-like Domain"/>
    <property type="match status" value="1"/>
</dbReference>
<dbReference type="HAMAP" id="MF_00046">
    <property type="entry name" value="MurC"/>
    <property type="match status" value="1"/>
</dbReference>
<dbReference type="InterPro" id="IPR036565">
    <property type="entry name" value="Mur-like_cat_sf"/>
</dbReference>
<dbReference type="InterPro" id="IPR004101">
    <property type="entry name" value="Mur_ligase_C"/>
</dbReference>
<dbReference type="InterPro" id="IPR036615">
    <property type="entry name" value="Mur_ligase_C_dom_sf"/>
</dbReference>
<dbReference type="InterPro" id="IPR013221">
    <property type="entry name" value="Mur_ligase_cen"/>
</dbReference>
<dbReference type="InterPro" id="IPR000713">
    <property type="entry name" value="Mur_ligase_N"/>
</dbReference>
<dbReference type="InterPro" id="IPR050061">
    <property type="entry name" value="MurCDEF_pg_biosynth"/>
</dbReference>
<dbReference type="InterPro" id="IPR005758">
    <property type="entry name" value="UDP-N-AcMur_Ala_ligase_MurC"/>
</dbReference>
<dbReference type="NCBIfam" id="TIGR01082">
    <property type="entry name" value="murC"/>
    <property type="match status" value="1"/>
</dbReference>
<dbReference type="PANTHER" id="PTHR43445:SF3">
    <property type="entry name" value="UDP-N-ACETYLMURAMATE--L-ALANINE LIGASE"/>
    <property type="match status" value="1"/>
</dbReference>
<dbReference type="PANTHER" id="PTHR43445">
    <property type="entry name" value="UDP-N-ACETYLMURAMATE--L-ALANINE LIGASE-RELATED"/>
    <property type="match status" value="1"/>
</dbReference>
<dbReference type="Pfam" id="PF01225">
    <property type="entry name" value="Mur_ligase"/>
    <property type="match status" value="1"/>
</dbReference>
<dbReference type="Pfam" id="PF02875">
    <property type="entry name" value="Mur_ligase_C"/>
    <property type="match status" value="1"/>
</dbReference>
<dbReference type="Pfam" id="PF08245">
    <property type="entry name" value="Mur_ligase_M"/>
    <property type="match status" value="1"/>
</dbReference>
<dbReference type="SUPFAM" id="SSF51984">
    <property type="entry name" value="MurCD N-terminal domain"/>
    <property type="match status" value="1"/>
</dbReference>
<dbReference type="SUPFAM" id="SSF53623">
    <property type="entry name" value="MurD-like peptide ligases, catalytic domain"/>
    <property type="match status" value="1"/>
</dbReference>
<dbReference type="SUPFAM" id="SSF53244">
    <property type="entry name" value="MurD-like peptide ligases, peptide-binding domain"/>
    <property type="match status" value="1"/>
</dbReference>
<reference key="1">
    <citation type="journal article" date="2009" name="Vaccine">
        <title>Whole genome sequence analysis of Mycobacterium bovis bacillus Calmette-Guerin (BCG) Tokyo 172: a comparative study of BCG vaccine substrains.</title>
        <authorList>
            <person name="Seki M."/>
            <person name="Honda I."/>
            <person name="Fujita I."/>
            <person name="Yano I."/>
            <person name="Yamamoto S."/>
            <person name="Koyama A."/>
        </authorList>
    </citation>
    <scope>NUCLEOTIDE SEQUENCE [LARGE SCALE GENOMIC DNA]</scope>
    <source>
        <strain>BCG / Tokyo 172 / ATCC 35737 / TMC 1019</strain>
    </source>
</reference>
<protein>
    <recommendedName>
        <fullName evidence="1">UDP-N-acetylmuramate--L-alanine ligase</fullName>
        <ecNumber evidence="1">6.3.2.8</ecNumber>
    </recommendedName>
    <alternativeName>
        <fullName evidence="1">UDP-N-acetylmuramoyl-L-alanine synthetase</fullName>
    </alternativeName>
</protein>
<organism>
    <name type="scientific">Mycobacterium bovis (strain BCG / Tokyo 172 / ATCC 35737 / TMC 1019)</name>
    <dbReference type="NCBI Taxonomy" id="561275"/>
    <lineage>
        <taxon>Bacteria</taxon>
        <taxon>Bacillati</taxon>
        <taxon>Actinomycetota</taxon>
        <taxon>Actinomycetes</taxon>
        <taxon>Mycobacteriales</taxon>
        <taxon>Mycobacteriaceae</taxon>
        <taxon>Mycobacterium</taxon>
        <taxon>Mycobacterium tuberculosis complex</taxon>
    </lineage>
</organism>
<sequence length="494" mass="51177">MSTEQLPPDLRRVHMVGIGGAGMSGIARILLDRGGLVSGSDAKESRGVHALRARGALIRIGHDASSLDLLPGGATAVVTTHAAIPKTNPELVEARRRGIPVVLRPAVLAKLMAGRTTLMVTGTHGKTTTTSMLIVALQHCGLDPSFAVGGELGEAGTNAHHGSGDCFVAEADESDGSLLQYTPHVAVITNIESDHLDFYGSVEAYVAVFDSFVERIVPGGALVVCTDDPGGAALAQRATELGIRVLRYGSVPGETMAATLVSWQQQGVGAVAHIRLASELATAQGPRVMRLSVPGRHMALNALGALLAAVQIGAPADEVLDGLAGFEGVRRRFELVGTCGVGKASVRVFDDYAHHPTEISATLAAARMVLEQGDGGRCMVVFQPHLYSRTKAFAAEFGRALNAADEVFVLDVYGAREQPLAGVSGASVAEHVTVPMRYVPDFSAVAQQVAAAASPGDVIVTMGAGDVTLLGPEILTALRVRANRSAPGRPGVLG</sequence>
<feature type="chain" id="PRO_1000192102" description="UDP-N-acetylmuramate--L-alanine ligase">
    <location>
        <begin position="1"/>
        <end position="494"/>
    </location>
</feature>
<feature type="binding site" evidence="1">
    <location>
        <begin position="122"/>
        <end position="128"/>
    </location>
    <ligand>
        <name>ATP</name>
        <dbReference type="ChEBI" id="CHEBI:30616"/>
    </ligand>
</feature>
<proteinExistence type="inferred from homology"/>
<accession>C1AQ68</accession>
<keyword id="KW-0067">ATP-binding</keyword>
<keyword id="KW-0131">Cell cycle</keyword>
<keyword id="KW-0132">Cell division</keyword>
<keyword id="KW-0133">Cell shape</keyword>
<keyword id="KW-0961">Cell wall biogenesis/degradation</keyword>
<keyword id="KW-0963">Cytoplasm</keyword>
<keyword id="KW-0436">Ligase</keyword>
<keyword id="KW-0547">Nucleotide-binding</keyword>
<keyword id="KW-0573">Peptidoglycan synthesis</keyword>